<dbReference type="EC" id="7.1.1.-"/>
<dbReference type="EMBL" id="L22504">
    <property type="protein sequence ID" value="AAA16061.1"/>
    <property type="molecule type" value="Unassigned_DNA"/>
</dbReference>
<dbReference type="EMBL" id="AE006468">
    <property type="protein sequence ID" value="AAL21226.1"/>
    <property type="molecule type" value="Genomic_DNA"/>
</dbReference>
<dbReference type="RefSeq" id="NP_461267.1">
    <property type="nucleotide sequence ID" value="NC_003197.2"/>
</dbReference>
<dbReference type="RefSeq" id="WP_000545038.1">
    <property type="nucleotide sequence ID" value="NC_003197.2"/>
</dbReference>
<dbReference type="SMR" id="P0A1Y8"/>
<dbReference type="STRING" id="99287.STM2325"/>
<dbReference type="PaxDb" id="99287-STM2325"/>
<dbReference type="GeneID" id="1253847"/>
<dbReference type="KEGG" id="stm:STM2325"/>
<dbReference type="PATRIC" id="fig|99287.12.peg.2462"/>
<dbReference type="HOGENOM" id="CLU_054362_2_0_6"/>
<dbReference type="OMA" id="HIIRYCD"/>
<dbReference type="PhylomeDB" id="P0A1Y8"/>
<dbReference type="BioCyc" id="SENT99287:STM2325-MONOMER"/>
<dbReference type="Proteomes" id="UP000001014">
    <property type="component" value="Chromosome"/>
</dbReference>
<dbReference type="GO" id="GO:0051537">
    <property type="term" value="F:2 iron, 2 sulfur cluster binding"/>
    <property type="evidence" value="ECO:0007669"/>
    <property type="project" value="UniProtKB-KW"/>
</dbReference>
<dbReference type="GO" id="GO:0046872">
    <property type="term" value="F:metal ion binding"/>
    <property type="evidence" value="ECO:0007669"/>
    <property type="project" value="UniProtKB-KW"/>
</dbReference>
<dbReference type="GO" id="GO:0016491">
    <property type="term" value="F:oxidoreductase activity"/>
    <property type="evidence" value="ECO:0007669"/>
    <property type="project" value="InterPro"/>
</dbReference>
<dbReference type="GO" id="GO:0048038">
    <property type="term" value="F:quinone binding"/>
    <property type="evidence" value="ECO:0007669"/>
    <property type="project" value="UniProtKB-KW"/>
</dbReference>
<dbReference type="GO" id="GO:0022904">
    <property type="term" value="P:respiratory electron transport chain"/>
    <property type="evidence" value="ECO:0000318"/>
    <property type="project" value="GO_Central"/>
</dbReference>
<dbReference type="CDD" id="cd03064">
    <property type="entry name" value="TRX_Fd_NuoE"/>
    <property type="match status" value="1"/>
</dbReference>
<dbReference type="FunFam" id="1.10.10.1590:FF:000001">
    <property type="entry name" value="NADH-quinone oxidoreductase subunit E"/>
    <property type="match status" value="1"/>
</dbReference>
<dbReference type="FunFam" id="3.40.30.10:FF:000015">
    <property type="entry name" value="NADH-quinone oxidoreductase subunit E"/>
    <property type="match status" value="1"/>
</dbReference>
<dbReference type="Gene3D" id="3.40.30.10">
    <property type="entry name" value="Glutaredoxin"/>
    <property type="match status" value="1"/>
</dbReference>
<dbReference type="Gene3D" id="1.10.10.1590">
    <property type="entry name" value="NADH-quinone oxidoreductase subunit E"/>
    <property type="match status" value="1"/>
</dbReference>
<dbReference type="InterPro" id="IPR002023">
    <property type="entry name" value="NuoE-like"/>
</dbReference>
<dbReference type="InterPro" id="IPR042128">
    <property type="entry name" value="NuoE_dom"/>
</dbReference>
<dbReference type="InterPro" id="IPR041921">
    <property type="entry name" value="NuoE_N"/>
</dbReference>
<dbReference type="InterPro" id="IPR036249">
    <property type="entry name" value="Thioredoxin-like_sf"/>
</dbReference>
<dbReference type="NCBIfam" id="TIGR01958">
    <property type="entry name" value="nuoE_fam"/>
    <property type="match status" value="1"/>
</dbReference>
<dbReference type="NCBIfam" id="NF005722">
    <property type="entry name" value="PRK07539.1-2"/>
    <property type="match status" value="1"/>
</dbReference>
<dbReference type="PANTHER" id="PTHR10371:SF3">
    <property type="entry name" value="NADH DEHYDROGENASE [UBIQUINONE] FLAVOPROTEIN 2, MITOCHONDRIAL"/>
    <property type="match status" value="1"/>
</dbReference>
<dbReference type="PANTHER" id="PTHR10371">
    <property type="entry name" value="NADH DEHYDROGENASE UBIQUINONE FLAVOPROTEIN 2, MITOCHONDRIAL"/>
    <property type="match status" value="1"/>
</dbReference>
<dbReference type="Pfam" id="PF01257">
    <property type="entry name" value="2Fe-2S_thioredx"/>
    <property type="match status" value="1"/>
</dbReference>
<dbReference type="PIRSF" id="PIRSF000216">
    <property type="entry name" value="NADH_DH_24kDa"/>
    <property type="match status" value="1"/>
</dbReference>
<dbReference type="SUPFAM" id="SSF52833">
    <property type="entry name" value="Thioredoxin-like"/>
    <property type="match status" value="1"/>
</dbReference>
<dbReference type="PROSITE" id="PS01099">
    <property type="entry name" value="COMPLEX1_24K"/>
    <property type="match status" value="1"/>
</dbReference>
<comment type="function">
    <text evidence="1">NDH-1 shuttles electrons from NADH, via FMN and iron-sulfur (Fe-S) centers, to quinones in the respiratory chain. The immediate electron acceptor for the enzyme in this species is believed to be ubiquinone. Couples the redox reaction to proton translocation (for every two electrons transferred, four hydrogen ions are translocated across the cytoplasmic membrane), and thus conserves the redox energy in a proton gradient (By similarity).</text>
</comment>
<comment type="catalytic activity">
    <reaction>
        <text>a quinone + NADH + 5 H(+)(in) = a quinol + NAD(+) + 4 H(+)(out)</text>
        <dbReference type="Rhea" id="RHEA:57888"/>
        <dbReference type="ChEBI" id="CHEBI:15378"/>
        <dbReference type="ChEBI" id="CHEBI:24646"/>
        <dbReference type="ChEBI" id="CHEBI:57540"/>
        <dbReference type="ChEBI" id="CHEBI:57945"/>
        <dbReference type="ChEBI" id="CHEBI:132124"/>
    </reaction>
</comment>
<comment type="cofactor">
    <cofactor evidence="3">
        <name>[2Fe-2S] cluster</name>
        <dbReference type="ChEBI" id="CHEBI:190135"/>
    </cofactor>
    <text evidence="3">Binds 1 [2Fe-2S] cluster.</text>
</comment>
<comment type="subunit">
    <text>Composed of 13 different subunits. Subunits NuoCD, E, F, and G constitute the peripheral sector of the complex.</text>
</comment>
<comment type="similarity">
    <text evidence="3">Belongs to the complex I 24 kDa subunit family.</text>
</comment>
<evidence type="ECO:0000250" key="1"/>
<evidence type="ECO:0000255" key="2"/>
<evidence type="ECO:0000305" key="3"/>
<feature type="chain" id="PRO_0000118694" description="NADH-quinone oxidoreductase subunit E">
    <location>
        <begin position="1"/>
        <end position="166"/>
    </location>
</feature>
<feature type="binding site" evidence="2">
    <location>
        <position position="92"/>
    </location>
    <ligand>
        <name>[2Fe-2S] cluster</name>
        <dbReference type="ChEBI" id="CHEBI:190135"/>
    </ligand>
</feature>
<feature type="binding site" evidence="2">
    <location>
        <position position="97"/>
    </location>
    <ligand>
        <name>[2Fe-2S] cluster</name>
        <dbReference type="ChEBI" id="CHEBI:190135"/>
    </ligand>
</feature>
<feature type="binding site" evidence="2">
    <location>
        <position position="133"/>
    </location>
    <ligand>
        <name>[2Fe-2S] cluster</name>
        <dbReference type="ChEBI" id="CHEBI:190135"/>
    </ligand>
</feature>
<feature type="binding site" evidence="2">
    <location>
        <position position="137"/>
    </location>
    <ligand>
        <name>[2Fe-2S] cluster</name>
        <dbReference type="ChEBI" id="CHEBI:190135"/>
    </ligand>
</feature>
<protein>
    <recommendedName>
        <fullName>NADH-quinone oxidoreductase subunit E</fullName>
        <ecNumber>7.1.1.-</ecNumber>
    </recommendedName>
    <alternativeName>
        <fullName>NADH dehydrogenase I subunit E</fullName>
    </alternativeName>
    <alternativeName>
        <fullName>NDH-1 subunit E</fullName>
    </alternativeName>
</protein>
<sequence length="166" mass="18602">MHENQQPQTEAFELSAAEREAIEHEKHHYEDPRAASIEALKIVQKQRGWVPDGAIYAIADVLGIPASDVEGVATFYSQIFRQPVGRHVIRYCDSVVCHITGYQGIQAALEKNLNIKPGQTTFDGRFTLLPTCCLGNCDKGPNMMIDEDTHSHLTPEAIPELLERYK</sequence>
<reference key="1">
    <citation type="journal article" date="1993" name="Proc. Natl. Acad. Sci. U.S.A.">
        <title>Mutants defective in the energy-conserving NADH dehydrogenase of Salmonella typhimurium identified by a decrease in energy-dependent proteolysis after carbon starvation.</title>
        <authorList>
            <person name="Archer C.D."/>
            <person name="Wang X."/>
            <person name="Elliott T."/>
        </authorList>
    </citation>
    <scope>NUCLEOTIDE SEQUENCE [GENOMIC DNA]</scope>
</reference>
<reference key="2">
    <citation type="journal article" date="2001" name="Nature">
        <title>Complete genome sequence of Salmonella enterica serovar Typhimurium LT2.</title>
        <authorList>
            <person name="McClelland M."/>
            <person name="Sanderson K.E."/>
            <person name="Spieth J."/>
            <person name="Clifton S.W."/>
            <person name="Latreille P."/>
            <person name="Courtney L."/>
            <person name="Porwollik S."/>
            <person name="Ali J."/>
            <person name="Dante M."/>
            <person name="Du F."/>
            <person name="Hou S."/>
            <person name="Layman D."/>
            <person name="Leonard S."/>
            <person name="Nguyen C."/>
            <person name="Scott K."/>
            <person name="Holmes A."/>
            <person name="Grewal N."/>
            <person name="Mulvaney E."/>
            <person name="Ryan E."/>
            <person name="Sun H."/>
            <person name="Florea L."/>
            <person name="Miller W."/>
            <person name="Stoneking T."/>
            <person name="Nhan M."/>
            <person name="Waterston R."/>
            <person name="Wilson R.K."/>
        </authorList>
    </citation>
    <scope>NUCLEOTIDE SEQUENCE [LARGE SCALE GENOMIC DNA]</scope>
    <source>
        <strain>LT2 / SGSC1412 / ATCC 700720</strain>
    </source>
</reference>
<gene>
    <name type="primary">nuoE</name>
    <name type="ordered locus">STM2325</name>
</gene>
<proteinExistence type="inferred from homology"/>
<accession>P0A1Y8</accession>
<accession>P33903</accession>
<keyword id="KW-0001">2Fe-2S</keyword>
<keyword id="KW-0408">Iron</keyword>
<keyword id="KW-0411">Iron-sulfur</keyword>
<keyword id="KW-0479">Metal-binding</keyword>
<keyword id="KW-0520">NAD</keyword>
<keyword id="KW-0874">Quinone</keyword>
<keyword id="KW-1185">Reference proteome</keyword>
<keyword id="KW-1278">Translocase</keyword>
<keyword id="KW-0830">Ubiquinone</keyword>
<name>NUOE_SALTY</name>
<organism>
    <name type="scientific">Salmonella typhimurium (strain LT2 / SGSC1412 / ATCC 700720)</name>
    <dbReference type="NCBI Taxonomy" id="99287"/>
    <lineage>
        <taxon>Bacteria</taxon>
        <taxon>Pseudomonadati</taxon>
        <taxon>Pseudomonadota</taxon>
        <taxon>Gammaproteobacteria</taxon>
        <taxon>Enterobacterales</taxon>
        <taxon>Enterobacteriaceae</taxon>
        <taxon>Salmonella</taxon>
    </lineage>
</organism>